<gene>
    <name type="primary">PR1</name>
</gene>
<reference key="1">
    <citation type="journal article" date="1992" name="Eur. J. Biochem.">
        <title>Molecular cloning and regulatory analysis of the cuticle-degrading-protease structural gene from the entomopathogenic fungus Metarhizium anisopliae.</title>
        <authorList>
            <person name="St Leger R.J."/>
            <person name="Frank D.C."/>
            <person name="Roberts D.W."/>
            <person name="Staples R.C."/>
        </authorList>
    </citation>
    <scope>NUCLEOTIDE SEQUENCE [MRNA]</scope>
    <scope>PROTEIN SEQUENCE OF 108-115</scope>
    <source>
        <strain>ME1 / ARSEF 2575</strain>
    </source>
</reference>
<organism>
    <name type="scientific">Metarhizium anisopliae</name>
    <name type="common">Entomophthora anisopliae</name>
    <dbReference type="NCBI Taxonomy" id="5530"/>
    <lineage>
        <taxon>Eukaryota</taxon>
        <taxon>Fungi</taxon>
        <taxon>Dikarya</taxon>
        <taxon>Ascomycota</taxon>
        <taxon>Pezizomycotina</taxon>
        <taxon>Sordariomycetes</taxon>
        <taxon>Hypocreomycetidae</taxon>
        <taxon>Hypocreales</taxon>
        <taxon>Clavicipitaceae</taxon>
        <taxon>Metarhizium</taxon>
    </lineage>
</organism>
<proteinExistence type="evidence at protein level"/>
<name>CUDP_METAN</name>
<feature type="signal peptide" evidence="2">
    <location>
        <begin position="1"/>
        <end position="18"/>
    </location>
</feature>
<feature type="propeptide" id="PRO_0000027006" evidence="2">
    <location>
        <begin position="19"/>
        <end position="107"/>
    </location>
</feature>
<feature type="chain" id="PRO_0000027007" description="Cuticle-degrading protease">
    <location>
        <begin position="108"/>
        <end position="388"/>
    </location>
</feature>
<feature type="domain" description="Inhibitor I9" evidence="2">
    <location>
        <begin position="41"/>
        <end position="106"/>
    </location>
</feature>
<feature type="domain" description="Peptidase S8" evidence="3">
    <location>
        <begin position="116"/>
        <end position="388"/>
    </location>
</feature>
<feature type="active site" description="Charge relay system" evidence="3">
    <location>
        <position position="148"/>
    </location>
</feature>
<feature type="active site" description="Charge relay system" evidence="3">
    <location>
        <position position="179"/>
    </location>
</feature>
<feature type="active site" description="Charge relay system" evidence="3">
    <location>
        <position position="334"/>
    </location>
</feature>
<feature type="glycosylation site" description="N-linked (GlcNAc...) asparagine" evidence="2">
    <location>
        <position position="296"/>
    </location>
</feature>
<feature type="disulfide bond" evidence="1">
    <location>
        <begin position="143"/>
        <end position="233"/>
    </location>
</feature>
<feature type="disulfide bond" evidence="1">
    <location>
        <begin position="288"/>
        <end position="360"/>
    </location>
</feature>
<accession>P29138</accession>
<evidence type="ECO:0000250" key="1"/>
<evidence type="ECO:0000255" key="2"/>
<evidence type="ECO:0000255" key="3">
    <source>
        <dbReference type="PROSITE-ProRule" id="PRU01240"/>
    </source>
</evidence>
<evidence type="ECO:0000305" key="4"/>
<sequence length="388" mass="40331">MHLSALLTLLPAVLAAPATIGRRAEPAPLFTPQAESIIADKYIVKFKDDIARIATDDTVSALTSKADFVYEHAFHGFAGSLTKEELKMLREHPGVDFIEKDAVMRISGITEQSGAPWGLGRISHRSKGSTTYRYDDSAGQGTCVYIIDTGIEASHPEFEGRATFLKSFISGQNTDGHGHGTHCAGTIGSKTYGVAKKAKLYGVKVLDNQGSGSYSGIISGMDYVAQDSKTRGCPNGAIASMSLGGGYSASVNQGAAALVNSGVFLAVAAGNDNRDAQNTSPASEPSACTVGASAENDSRSSFSNYGRVVDIFAPGSNVLSTWIVGRTNSISGTSMATPHIAGLAAYLSALQGKTTPAALCKKIQDTATKNVLTGVPSGTVNYLAYNGA</sequence>
<dbReference type="EC" id="3.4.21.-"/>
<dbReference type="EMBL" id="M73795">
    <property type="protein sequence ID" value="AAA33417.1"/>
    <property type="molecule type" value="mRNA"/>
</dbReference>
<dbReference type="PIR" id="S22387">
    <property type="entry name" value="S22387"/>
</dbReference>
<dbReference type="SMR" id="P29138"/>
<dbReference type="MEROPS" id="S08.056"/>
<dbReference type="GlyCosmos" id="P29138">
    <property type="glycosylation" value="1 site, No reported glycans"/>
</dbReference>
<dbReference type="VEuPathDB" id="FungiDB:MAN_03501"/>
<dbReference type="PHI-base" id="PHI:4615"/>
<dbReference type="GO" id="GO:0005576">
    <property type="term" value="C:extracellular region"/>
    <property type="evidence" value="ECO:0007669"/>
    <property type="project" value="UniProtKB-SubCell"/>
</dbReference>
<dbReference type="GO" id="GO:0004252">
    <property type="term" value="F:serine-type endopeptidase activity"/>
    <property type="evidence" value="ECO:0007669"/>
    <property type="project" value="InterPro"/>
</dbReference>
<dbReference type="GO" id="GO:0006508">
    <property type="term" value="P:proteolysis"/>
    <property type="evidence" value="ECO:0007669"/>
    <property type="project" value="UniProtKB-KW"/>
</dbReference>
<dbReference type="CDD" id="cd04077">
    <property type="entry name" value="Peptidases_S8_PCSK9_ProteinaseK_like"/>
    <property type="match status" value="1"/>
</dbReference>
<dbReference type="FunFam" id="3.40.50.200:FF:000014">
    <property type="entry name" value="Proteinase K"/>
    <property type="match status" value="1"/>
</dbReference>
<dbReference type="Gene3D" id="3.30.70.80">
    <property type="entry name" value="Peptidase S8 propeptide/proteinase inhibitor I9"/>
    <property type="match status" value="1"/>
</dbReference>
<dbReference type="Gene3D" id="3.40.50.200">
    <property type="entry name" value="Peptidase S8/S53 domain"/>
    <property type="match status" value="1"/>
</dbReference>
<dbReference type="InterPro" id="IPR034193">
    <property type="entry name" value="PCSK9_ProteinaseK-like"/>
</dbReference>
<dbReference type="InterPro" id="IPR000209">
    <property type="entry name" value="Peptidase_S8/S53_dom"/>
</dbReference>
<dbReference type="InterPro" id="IPR036852">
    <property type="entry name" value="Peptidase_S8/S53_dom_sf"/>
</dbReference>
<dbReference type="InterPro" id="IPR023827">
    <property type="entry name" value="Peptidase_S8_Asp-AS"/>
</dbReference>
<dbReference type="InterPro" id="IPR022398">
    <property type="entry name" value="Peptidase_S8_His-AS"/>
</dbReference>
<dbReference type="InterPro" id="IPR023828">
    <property type="entry name" value="Peptidase_S8_Ser-AS"/>
</dbReference>
<dbReference type="InterPro" id="IPR050131">
    <property type="entry name" value="Peptidase_S8_subtilisin-like"/>
</dbReference>
<dbReference type="InterPro" id="IPR015500">
    <property type="entry name" value="Peptidase_S8_subtilisin-rel"/>
</dbReference>
<dbReference type="InterPro" id="IPR010259">
    <property type="entry name" value="S8pro/Inhibitor_I9"/>
</dbReference>
<dbReference type="InterPro" id="IPR037045">
    <property type="entry name" value="S8pro/Inhibitor_I9_sf"/>
</dbReference>
<dbReference type="PANTHER" id="PTHR43806:SF58">
    <property type="entry name" value="ALKALINE PROTEASE 1-RELATED"/>
    <property type="match status" value="1"/>
</dbReference>
<dbReference type="PANTHER" id="PTHR43806">
    <property type="entry name" value="PEPTIDASE S8"/>
    <property type="match status" value="1"/>
</dbReference>
<dbReference type="Pfam" id="PF05922">
    <property type="entry name" value="Inhibitor_I9"/>
    <property type="match status" value="1"/>
</dbReference>
<dbReference type="Pfam" id="PF00082">
    <property type="entry name" value="Peptidase_S8"/>
    <property type="match status" value="1"/>
</dbReference>
<dbReference type="PRINTS" id="PR00723">
    <property type="entry name" value="SUBTILISIN"/>
</dbReference>
<dbReference type="SUPFAM" id="SSF54897">
    <property type="entry name" value="Protease propeptides/inhibitors"/>
    <property type="match status" value="1"/>
</dbReference>
<dbReference type="SUPFAM" id="SSF52743">
    <property type="entry name" value="Subtilisin-like"/>
    <property type="match status" value="1"/>
</dbReference>
<dbReference type="PROSITE" id="PS51892">
    <property type="entry name" value="SUBTILASE"/>
    <property type="match status" value="1"/>
</dbReference>
<dbReference type="PROSITE" id="PS00136">
    <property type="entry name" value="SUBTILASE_ASP"/>
    <property type="match status" value="1"/>
</dbReference>
<dbReference type="PROSITE" id="PS00137">
    <property type="entry name" value="SUBTILASE_HIS"/>
    <property type="match status" value="1"/>
</dbReference>
<dbReference type="PROSITE" id="PS00138">
    <property type="entry name" value="SUBTILASE_SER"/>
    <property type="match status" value="1"/>
</dbReference>
<comment type="function">
    <text>Capable of breaching the insect cuticle.</text>
</comment>
<comment type="subcellular location">
    <subcellularLocation>
        <location>Secreted</location>
    </subcellularLocation>
</comment>
<comment type="similarity">
    <text evidence="4">Belongs to the peptidase S8 family.</text>
</comment>
<protein>
    <recommendedName>
        <fullName>Cuticle-degrading protease</fullName>
        <ecNumber>3.4.21.-</ecNumber>
    </recommendedName>
    <alternativeName>
        <fullName>Chymoelastase</fullName>
    </alternativeName>
    <alternativeName>
        <fullName>PR1</fullName>
    </alternativeName>
</protein>
<keyword id="KW-0903">Direct protein sequencing</keyword>
<keyword id="KW-1015">Disulfide bond</keyword>
<keyword id="KW-0325">Glycoprotein</keyword>
<keyword id="KW-0378">Hydrolase</keyword>
<keyword id="KW-0645">Protease</keyword>
<keyword id="KW-0964">Secreted</keyword>
<keyword id="KW-0720">Serine protease</keyword>
<keyword id="KW-0732">Signal</keyword>
<keyword id="KW-0865">Zymogen</keyword>